<gene>
    <name type="primary">fba</name>
    <name type="ordered locus">BB_0445</name>
</gene>
<organism>
    <name type="scientific">Borreliella burgdorferi (strain ATCC 35210 / DSM 4680 / CIP 102532 / B31)</name>
    <name type="common">Borrelia burgdorferi</name>
    <dbReference type="NCBI Taxonomy" id="224326"/>
    <lineage>
        <taxon>Bacteria</taxon>
        <taxon>Pseudomonadati</taxon>
        <taxon>Spirochaetota</taxon>
        <taxon>Spirochaetia</taxon>
        <taxon>Spirochaetales</taxon>
        <taxon>Borreliaceae</taxon>
        <taxon>Borreliella</taxon>
    </lineage>
</organism>
<sequence length="359" mass="39981">MGVLDKIKPGVVYGKELHFLYEICKKEGFAIPSINCIGTNSINAVLEAAKEINSPIMIQFSNSGSAFISGKGLKMEKPQGVSIVGAISGAMHVHLMAEHYGVPVVLHTDHCAKNLLPWVEGLLEYGEKYYSQHKKPLFSSHMLDLSEEPIKENIEISKKFLERMAKIEMFLEIELGITGGEEDGVDNSDRALHELFSTPEDIYYGYSELLKVSPNFQIAAAFGNVHGVYKPGNVKLTPKVLKDGQDYVISKTGVNMAKPVSYVFHGGSGSTIDEINEALSYGVVKMNIDTDTQWAAWEGVLNYYKKNESRLQGQLGDGKDIDIPNKKFYDPRVWLREAEVSMKDRVKIACKNLNNINRN</sequence>
<protein>
    <recommendedName>
        <fullName>Fructose-bisphosphate aldolase</fullName>
        <shortName>FBP aldolase</shortName>
        <shortName>FBPA</shortName>
        <ecNumber>4.1.2.13</ecNumber>
    </recommendedName>
    <alternativeName>
        <fullName>Fructose-1,6-bisphosphate aldolase</fullName>
    </alternativeName>
</protein>
<comment type="function">
    <text evidence="1">Catalyzes the aldol condensation of dihydroxyacetone phosphate (DHAP or glycerone-phosphate) with glyceraldehyde 3-phosphate (G3P) to form fructose 1,6-bisphosphate (FBP) in gluconeogenesis and the reverse reaction in glycolysis.</text>
</comment>
<comment type="catalytic activity">
    <reaction>
        <text>beta-D-fructose 1,6-bisphosphate = D-glyceraldehyde 3-phosphate + dihydroxyacetone phosphate</text>
        <dbReference type="Rhea" id="RHEA:14729"/>
        <dbReference type="ChEBI" id="CHEBI:32966"/>
        <dbReference type="ChEBI" id="CHEBI:57642"/>
        <dbReference type="ChEBI" id="CHEBI:59776"/>
        <dbReference type="EC" id="4.1.2.13"/>
    </reaction>
</comment>
<comment type="cofactor">
    <cofactor evidence="1">
        <name>Zn(2+)</name>
        <dbReference type="ChEBI" id="CHEBI:29105"/>
    </cofactor>
    <text evidence="1">Binds 2 Zn(2+) ions per subunit. One is catalytic and the other provides a structural contribution.</text>
</comment>
<comment type="pathway">
    <text>Carbohydrate degradation; glycolysis; D-glyceraldehyde 3-phosphate and glycerone phosphate from D-glucose: step 4/4.</text>
</comment>
<comment type="similarity">
    <text evidence="2">Belongs to the class II fructose-bisphosphate aldolase family.</text>
</comment>
<proteinExistence type="evidence at protein level"/>
<name>ALF_BORBU</name>
<evidence type="ECO:0000250" key="1"/>
<evidence type="ECO:0000305" key="2"/>
<reference key="1">
    <citation type="journal article" date="1997" name="Nature">
        <title>Genomic sequence of a Lyme disease spirochaete, Borrelia burgdorferi.</title>
        <authorList>
            <person name="Fraser C.M."/>
            <person name="Casjens S."/>
            <person name="Huang W.M."/>
            <person name="Sutton G.G."/>
            <person name="Clayton R.A."/>
            <person name="Lathigra R."/>
            <person name="White O."/>
            <person name="Ketchum K.A."/>
            <person name="Dodson R.J."/>
            <person name="Hickey E.K."/>
            <person name="Gwinn M.L."/>
            <person name="Dougherty B.A."/>
            <person name="Tomb J.-F."/>
            <person name="Fleischmann R.D."/>
            <person name="Richardson D.L."/>
            <person name="Peterson J.D."/>
            <person name="Kerlavage A.R."/>
            <person name="Quackenbush J."/>
            <person name="Salzberg S.L."/>
            <person name="Hanson M."/>
            <person name="van Vugt R."/>
            <person name="Palmer N."/>
            <person name="Adams M.D."/>
            <person name="Gocayne J.D."/>
            <person name="Weidman J.F."/>
            <person name="Utterback T.R."/>
            <person name="Watthey L."/>
            <person name="McDonald L.A."/>
            <person name="Artiach P."/>
            <person name="Bowman C."/>
            <person name="Garland S.A."/>
            <person name="Fujii C."/>
            <person name="Cotton M.D."/>
            <person name="Horst K."/>
            <person name="Roberts K.M."/>
            <person name="Hatch B."/>
            <person name="Smith H.O."/>
            <person name="Venter J.C."/>
        </authorList>
    </citation>
    <scope>NUCLEOTIDE SEQUENCE [LARGE SCALE GENOMIC DNA]</scope>
    <source>
        <strain>ATCC 35210 / DSM 4680 / CIP 102532 / B31</strain>
    </source>
</reference>
<reference key="2">
    <citation type="journal article" date="1989" name="J. Clin. Invest.">
        <title>Identification and characterization of an endoflagellar antigen of Borrelia burgdorferi.</title>
        <authorList>
            <person name="Coleman J.L."/>
            <person name="Benach J.L."/>
        </authorList>
    </citation>
    <scope>PROTEIN SEQUENCE OF 2-11</scope>
    <source>
        <strain>ATCC 35210 / DSM 4680 / CIP 102532 / B31</strain>
    </source>
</reference>
<keyword id="KW-0903">Direct protein sequencing</keyword>
<keyword id="KW-0324">Glycolysis</keyword>
<keyword id="KW-0456">Lyase</keyword>
<keyword id="KW-0479">Metal-binding</keyword>
<keyword id="KW-1185">Reference proteome</keyword>
<keyword id="KW-0862">Zinc</keyword>
<dbReference type="EC" id="4.1.2.13"/>
<dbReference type="EMBL" id="AE000783">
    <property type="protein sequence ID" value="AAB91507.1"/>
    <property type="molecule type" value="Genomic_DNA"/>
</dbReference>
<dbReference type="PIR" id="D70155">
    <property type="entry name" value="D70155"/>
</dbReference>
<dbReference type="RefSeq" id="NP_212579.1">
    <property type="nucleotide sequence ID" value="NC_001318.1"/>
</dbReference>
<dbReference type="SMR" id="O51401"/>
<dbReference type="STRING" id="224326.BB_0445"/>
<dbReference type="PaxDb" id="224326-BB_0445"/>
<dbReference type="EnsemblBacteria" id="AAB91507">
    <property type="protein sequence ID" value="AAB91507"/>
    <property type="gene ID" value="BB_0445"/>
</dbReference>
<dbReference type="KEGG" id="bbu:BB_0445"/>
<dbReference type="PATRIC" id="fig|224326.49.peg.836"/>
<dbReference type="HOGENOM" id="CLU_036923_0_0_12"/>
<dbReference type="OrthoDB" id="9803995at2"/>
<dbReference type="UniPathway" id="UPA00109">
    <property type="reaction ID" value="UER00183"/>
</dbReference>
<dbReference type="Proteomes" id="UP000001807">
    <property type="component" value="Chromosome"/>
</dbReference>
<dbReference type="GO" id="GO:0005829">
    <property type="term" value="C:cytosol"/>
    <property type="evidence" value="ECO:0000314"/>
    <property type="project" value="CAFA"/>
</dbReference>
<dbReference type="GO" id="GO:0004332">
    <property type="term" value="F:fructose-bisphosphate aldolase activity"/>
    <property type="evidence" value="ECO:0007669"/>
    <property type="project" value="UniProtKB-EC"/>
</dbReference>
<dbReference type="GO" id="GO:0008270">
    <property type="term" value="F:zinc ion binding"/>
    <property type="evidence" value="ECO:0007669"/>
    <property type="project" value="InterPro"/>
</dbReference>
<dbReference type="GO" id="GO:0006094">
    <property type="term" value="P:gluconeogenesis"/>
    <property type="evidence" value="ECO:0007669"/>
    <property type="project" value="TreeGrafter"/>
</dbReference>
<dbReference type="GO" id="GO:0006096">
    <property type="term" value="P:glycolytic process"/>
    <property type="evidence" value="ECO:0007669"/>
    <property type="project" value="UniProtKB-UniPathway"/>
</dbReference>
<dbReference type="CDD" id="cd00946">
    <property type="entry name" value="FBP_aldolase_IIA"/>
    <property type="match status" value="1"/>
</dbReference>
<dbReference type="FunFam" id="3.20.20.70:FF:000013">
    <property type="entry name" value="Class II fructose-bisphosphate aldolase"/>
    <property type="match status" value="1"/>
</dbReference>
<dbReference type="Gene3D" id="3.20.20.70">
    <property type="entry name" value="Aldolase class I"/>
    <property type="match status" value="1"/>
</dbReference>
<dbReference type="InterPro" id="IPR013785">
    <property type="entry name" value="Aldolase_TIM"/>
</dbReference>
<dbReference type="InterPro" id="IPR000771">
    <property type="entry name" value="FBA_II"/>
</dbReference>
<dbReference type="InterPro" id="IPR006411">
    <property type="entry name" value="Fruct_bisP_bact"/>
</dbReference>
<dbReference type="NCBIfam" id="TIGR00167">
    <property type="entry name" value="cbbA"/>
    <property type="match status" value="1"/>
</dbReference>
<dbReference type="NCBIfam" id="TIGR01520">
    <property type="entry name" value="FruBisAldo_II_A"/>
    <property type="match status" value="1"/>
</dbReference>
<dbReference type="NCBIfam" id="NF006628">
    <property type="entry name" value="PRK09197.1"/>
    <property type="match status" value="1"/>
</dbReference>
<dbReference type="PANTHER" id="PTHR30559:SF0">
    <property type="entry name" value="FRUCTOSE-BISPHOSPHATE ALDOLASE"/>
    <property type="match status" value="1"/>
</dbReference>
<dbReference type="PANTHER" id="PTHR30559">
    <property type="entry name" value="FRUCTOSE-BISPHOSPHATE ALDOLASE CLASS 2"/>
    <property type="match status" value="1"/>
</dbReference>
<dbReference type="Pfam" id="PF01116">
    <property type="entry name" value="F_bP_aldolase"/>
    <property type="match status" value="1"/>
</dbReference>
<dbReference type="PIRSF" id="PIRSF001359">
    <property type="entry name" value="F_bP_aldolase_II"/>
    <property type="match status" value="1"/>
</dbReference>
<dbReference type="SUPFAM" id="SSF51569">
    <property type="entry name" value="Aldolase"/>
    <property type="match status" value="1"/>
</dbReference>
<dbReference type="PROSITE" id="PS00602">
    <property type="entry name" value="ALDOLASE_CLASS_II_1"/>
    <property type="match status" value="1"/>
</dbReference>
<dbReference type="PROSITE" id="PS00806">
    <property type="entry name" value="ALDOLASE_CLASS_II_2"/>
    <property type="match status" value="1"/>
</dbReference>
<feature type="chain" id="PRO_0000178707" description="Fructose-bisphosphate aldolase">
    <location>
        <begin position="1"/>
        <end position="359"/>
    </location>
</feature>
<feature type="active site" description="Proton donor" evidence="1">
    <location>
        <position position="109"/>
    </location>
</feature>
<feature type="binding site" evidence="1">
    <location>
        <position position="61"/>
    </location>
    <ligand>
        <name>D-glyceraldehyde 3-phosphate</name>
        <dbReference type="ChEBI" id="CHEBI:59776"/>
    </ligand>
</feature>
<feature type="binding site" evidence="1">
    <location>
        <position position="110"/>
    </location>
    <ligand>
        <name>Zn(2+)</name>
        <dbReference type="ChEBI" id="CHEBI:29105"/>
        <label>1</label>
        <note>catalytic</note>
    </ligand>
</feature>
<feature type="binding site" evidence="1">
    <location>
        <position position="144"/>
    </location>
    <ligand>
        <name>Zn(2+)</name>
        <dbReference type="ChEBI" id="CHEBI:29105"/>
        <label>2</label>
    </ligand>
</feature>
<feature type="binding site" evidence="1">
    <location>
        <position position="174"/>
    </location>
    <ligand>
        <name>Zn(2+)</name>
        <dbReference type="ChEBI" id="CHEBI:29105"/>
        <label>2</label>
    </ligand>
</feature>
<feature type="binding site" evidence="1">
    <location>
        <position position="226"/>
    </location>
    <ligand>
        <name>Zn(2+)</name>
        <dbReference type="ChEBI" id="CHEBI:29105"/>
        <label>1</label>
        <note>catalytic</note>
    </ligand>
</feature>
<feature type="binding site" evidence="1">
    <location>
        <position position="227"/>
    </location>
    <ligand>
        <name>dihydroxyacetone phosphate</name>
        <dbReference type="ChEBI" id="CHEBI:57642"/>
    </ligand>
</feature>
<feature type="binding site" evidence="1">
    <location>
        <position position="265"/>
    </location>
    <ligand>
        <name>Zn(2+)</name>
        <dbReference type="ChEBI" id="CHEBI:29105"/>
        <label>1</label>
        <note>catalytic</note>
    </ligand>
</feature>
<feature type="binding site" evidence="1">
    <location>
        <begin position="266"/>
        <end position="268"/>
    </location>
    <ligand>
        <name>dihydroxyacetone phosphate</name>
        <dbReference type="ChEBI" id="CHEBI:57642"/>
    </ligand>
</feature>
<feature type="binding site" evidence="1">
    <location>
        <begin position="287"/>
        <end position="290"/>
    </location>
    <ligand>
        <name>dihydroxyacetone phosphate</name>
        <dbReference type="ChEBI" id="CHEBI:57642"/>
    </ligand>
</feature>
<feature type="sequence conflict" description="In Ref. 2; AA sequence." evidence="2" ref="2">
    <original>G</original>
    <variation>S</variation>
    <location>
        <position position="2"/>
    </location>
</feature>
<feature type="sequence conflict" description="In Ref. 2; AA sequence." evidence="2" ref="2">
    <original>K</original>
    <variation>L</variation>
    <location>
        <position position="6"/>
    </location>
</feature>
<accession>O51401</accession>